<proteinExistence type="inferred from homology"/>
<accession>B7NMH5</accession>
<comment type="function">
    <text evidence="1">May function as a transcriptional regulator that controls feoABC expression.</text>
</comment>
<comment type="similarity">
    <text evidence="1">Belongs to the FeoC family.</text>
</comment>
<evidence type="ECO:0000255" key="1">
    <source>
        <dbReference type="HAMAP-Rule" id="MF_01586"/>
    </source>
</evidence>
<dbReference type="EMBL" id="CU928164">
    <property type="protein sequence ID" value="CAR20003.1"/>
    <property type="molecule type" value="Genomic_DNA"/>
</dbReference>
<dbReference type="RefSeq" id="WP_001490566.1">
    <property type="nucleotide sequence ID" value="NC_011750.1"/>
</dbReference>
<dbReference type="RefSeq" id="YP_002409784.1">
    <property type="nucleotide sequence ID" value="NC_011750.1"/>
</dbReference>
<dbReference type="SMR" id="B7NMH5"/>
<dbReference type="STRING" id="585057.ECIAI39_3890"/>
<dbReference type="KEGG" id="ect:ECIAI39_3890"/>
<dbReference type="PATRIC" id="fig|585057.6.peg.4028"/>
<dbReference type="HOGENOM" id="CLU_189182_0_0_6"/>
<dbReference type="Proteomes" id="UP000000749">
    <property type="component" value="Chromosome"/>
</dbReference>
<dbReference type="GO" id="GO:0003677">
    <property type="term" value="F:DNA binding"/>
    <property type="evidence" value="ECO:0007669"/>
    <property type="project" value="UniProtKB-KW"/>
</dbReference>
<dbReference type="GO" id="GO:0005506">
    <property type="term" value="F:iron ion binding"/>
    <property type="evidence" value="ECO:0007669"/>
    <property type="project" value="UniProtKB-UniRule"/>
</dbReference>
<dbReference type="GO" id="GO:0051536">
    <property type="term" value="F:iron-sulfur cluster binding"/>
    <property type="evidence" value="ECO:0007669"/>
    <property type="project" value="UniProtKB-KW"/>
</dbReference>
<dbReference type="Gene3D" id="1.10.10.10">
    <property type="entry name" value="Winged helix-like DNA-binding domain superfamily/Winged helix DNA-binding domain"/>
    <property type="match status" value="1"/>
</dbReference>
<dbReference type="HAMAP" id="MF_01586">
    <property type="entry name" value="FeoC"/>
    <property type="match status" value="1"/>
</dbReference>
<dbReference type="InterPro" id="IPR023732">
    <property type="entry name" value="FeoC"/>
</dbReference>
<dbReference type="InterPro" id="IPR015102">
    <property type="entry name" value="Tscrpt_reg_HTH_FeoC"/>
</dbReference>
<dbReference type="InterPro" id="IPR036388">
    <property type="entry name" value="WH-like_DNA-bd_sf"/>
</dbReference>
<dbReference type="InterPro" id="IPR036390">
    <property type="entry name" value="WH_DNA-bd_sf"/>
</dbReference>
<dbReference type="NCBIfam" id="NF011960">
    <property type="entry name" value="PRK15431.1"/>
    <property type="match status" value="1"/>
</dbReference>
<dbReference type="Pfam" id="PF09012">
    <property type="entry name" value="FeoC"/>
    <property type="match status" value="1"/>
</dbReference>
<dbReference type="SUPFAM" id="SSF46785">
    <property type="entry name" value="Winged helix' DNA-binding domain"/>
    <property type="match status" value="1"/>
</dbReference>
<sequence length="78" mass="8687">MASLIQVRDLLALRGRMEAAQISQTLNTPQPMINAMLQQLESMGKAVRIQEEPDGCLSGNCKSCPEGKACLREWWALR</sequence>
<gene>
    <name evidence="1" type="primary">feoC</name>
    <name type="ordered locus">ECIAI39_3890</name>
</gene>
<organism>
    <name type="scientific">Escherichia coli O7:K1 (strain IAI39 / ExPEC)</name>
    <dbReference type="NCBI Taxonomy" id="585057"/>
    <lineage>
        <taxon>Bacteria</taxon>
        <taxon>Pseudomonadati</taxon>
        <taxon>Pseudomonadota</taxon>
        <taxon>Gammaproteobacteria</taxon>
        <taxon>Enterobacterales</taxon>
        <taxon>Enterobacteriaceae</taxon>
        <taxon>Escherichia</taxon>
    </lineage>
</organism>
<protein>
    <recommendedName>
        <fullName evidence="1">Probable [Fe-S]-dependent transcriptional repressor</fullName>
    </recommendedName>
</protein>
<feature type="chain" id="PRO_1000201325" description="Probable [Fe-S]-dependent transcriptional repressor">
    <location>
        <begin position="1"/>
        <end position="78"/>
    </location>
</feature>
<feature type="binding site" evidence="1">
    <location>
        <position position="56"/>
    </location>
    <ligand>
        <name>iron-sulfur cluster</name>
        <dbReference type="ChEBI" id="CHEBI:30408"/>
    </ligand>
</feature>
<feature type="binding site" evidence="1">
    <location>
        <position position="61"/>
    </location>
    <ligand>
        <name>iron-sulfur cluster</name>
        <dbReference type="ChEBI" id="CHEBI:30408"/>
    </ligand>
</feature>
<feature type="binding site" evidence="1">
    <location>
        <position position="64"/>
    </location>
    <ligand>
        <name>iron-sulfur cluster</name>
        <dbReference type="ChEBI" id="CHEBI:30408"/>
    </ligand>
</feature>
<feature type="binding site" evidence="1">
    <location>
        <position position="70"/>
    </location>
    <ligand>
        <name>iron-sulfur cluster</name>
        <dbReference type="ChEBI" id="CHEBI:30408"/>
    </ligand>
</feature>
<reference key="1">
    <citation type="journal article" date="2009" name="PLoS Genet.">
        <title>Organised genome dynamics in the Escherichia coli species results in highly diverse adaptive paths.</title>
        <authorList>
            <person name="Touchon M."/>
            <person name="Hoede C."/>
            <person name="Tenaillon O."/>
            <person name="Barbe V."/>
            <person name="Baeriswyl S."/>
            <person name="Bidet P."/>
            <person name="Bingen E."/>
            <person name="Bonacorsi S."/>
            <person name="Bouchier C."/>
            <person name="Bouvet O."/>
            <person name="Calteau A."/>
            <person name="Chiapello H."/>
            <person name="Clermont O."/>
            <person name="Cruveiller S."/>
            <person name="Danchin A."/>
            <person name="Diard M."/>
            <person name="Dossat C."/>
            <person name="Karoui M.E."/>
            <person name="Frapy E."/>
            <person name="Garry L."/>
            <person name="Ghigo J.M."/>
            <person name="Gilles A.M."/>
            <person name="Johnson J."/>
            <person name="Le Bouguenec C."/>
            <person name="Lescat M."/>
            <person name="Mangenot S."/>
            <person name="Martinez-Jehanne V."/>
            <person name="Matic I."/>
            <person name="Nassif X."/>
            <person name="Oztas S."/>
            <person name="Petit M.A."/>
            <person name="Pichon C."/>
            <person name="Rouy Z."/>
            <person name="Ruf C.S."/>
            <person name="Schneider D."/>
            <person name="Tourret J."/>
            <person name="Vacherie B."/>
            <person name="Vallenet D."/>
            <person name="Medigue C."/>
            <person name="Rocha E.P.C."/>
            <person name="Denamur E."/>
        </authorList>
    </citation>
    <scope>NUCLEOTIDE SEQUENCE [LARGE SCALE GENOMIC DNA]</scope>
    <source>
        <strain>IAI39 / ExPEC</strain>
    </source>
</reference>
<name>FEOC_ECO7I</name>
<keyword id="KW-0238">DNA-binding</keyword>
<keyword id="KW-0408">Iron</keyword>
<keyword id="KW-0411">Iron-sulfur</keyword>
<keyword id="KW-0479">Metal-binding</keyword>
<keyword id="KW-0678">Repressor</keyword>
<keyword id="KW-0804">Transcription</keyword>
<keyword id="KW-0805">Transcription regulation</keyword>